<reference key="1">
    <citation type="journal article" date="2004" name="Proc. Natl. Acad. Sci. U.S.A.">
        <title>Insights into the evolution of Yersinia pestis through whole-genome comparison with Yersinia pseudotuberculosis.</title>
        <authorList>
            <person name="Chain P.S.G."/>
            <person name="Carniel E."/>
            <person name="Larimer F.W."/>
            <person name="Lamerdin J."/>
            <person name="Stoutland P.O."/>
            <person name="Regala W.M."/>
            <person name="Georgescu A.M."/>
            <person name="Vergez L.M."/>
            <person name="Land M.L."/>
            <person name="Motin V.L."/>
            <person name="Brubaker R.R."/>
            <person name="Fowler J."/>
            <person name="Hinnebusch J."/>
            <person name="Marceau M."/>
            <person name="Medigue C."/>
            <person name="Simonet M."/>
            <person name="Chenal-Francisque V."/>
            <person name="Souza B."/>
            <person name="Dacheux D."/>
            <person name="Elliott J.M."/>
            <person name="Derbise A."/>
            <person name="Hauser L.J."/>
            <person name="Garcia E."/>
        </authorList>
    </citation>
    <scope>NUCLEOTIDE SEQUENCE [LARGE SCALE GENOMIC DNA]</scope>
    <source>
        <strain>IP32953</strain>
    </source>
</reference>
<feature type="chain" id="PRO_0000224604" description="Valine--tRNA ligase">
    <location>
        <begin position="1"/>
        <end position="965"/>
    </location>
</feature>
<feature type="region of interest" description="Disordered" evidence="2">
    <location>
        <begin position="1"/>
        <end position="22"/>
    </location>
</feature>
<feature type="coiled-coil region" evidence="1">
    <location>
        <begin position="896"/>
        <end position="965"/>
    </location>
</feature>
<feature type="short sequence motif" description="'HIGH' region">
    <location>
        <begin position="56"/>
        <end position="66"/>
    </location>
</feature>
<feature type="short sequence motif" description="'KMSKS' region">
    <location>
        <begin position="568"/>
        <end position="572"/>
    </location>
</feature>
<feature type="binding site" evidence="1">
    <location>
        <position position="571"/>
    </location>
    <ligand>
        <name>ATP</name>
        <dbReference type="ChEBI" id="CHEBI:30616"/>
    </ligand>
</feature>
<keyword id="KW-0030">Aminoacyl-tRNA synthetase</keyword>
<keyword id="KW-0067">ATP-binding</keyword>
<keyword id="KW-0175">Coiled coil</keyword>
<keyword id="KW-0963">Cytoplasm</keyword>
<keyword id="KW-0436">Ligase</keyword>
<keyword id="KW-0547">Nucleotide-binding</keyword>
<keyword id="KW-0648">Protein biosynthesis</keyword>
<gene>
    <name evidence="1" type="primary">valS</name>
    <name type="ordered locus">YPTB0529</name>
</gene>
<evidence type="ECO:0000255" key="1">
    <source>
        <dbReference type="HAMAP-Rule" id="MF_02004"/>
    </source>
</evidence>
<evidence type="ECO:0000256" key="2">
    <source>
        <dbReference type="SAM" id="MobiDB-lite"/>
    </source>
</evidence>
<proteinExistence type="inferred from homology"/>
<organism>
    <name type="scientific">Yersinia pseudotuberculosis serotype I (strain IP32953)</name>
    <dbReference type="NCBI Taxonomy" id="273123"/>
    <lineage>
        <taxon>Bacteria</taxon>
        <taxon>Pseudomonadati</taxon>
        <taxon>Pseudomonadota</taxon>
        <taxon>Gammaproteobacteria</taxon>
        <taxon>Enterobacterales</taxon>
        <taxon>Yersiniaceae</taxon>
        <taxon>Yersinia</taxon>
    </lineage>
</organism>
<dbReference type="EC" id="6.1.1.9" evidence="1"/>
<dbReference type="EMBL" id="BX936398">
    <property type="protein sequence ID" value="CAH19769.1"/>
    <property type="molecule type" value="Genomic_DNA"/>
</dbReference>
<dbReference type="RefSeq" id="WP_011191653.1">
    <property type="nucleotide sequence ID" value="NC_006155.1"/>
</dbReference>
<dbReference type="SMR" id="Q66F11"/>
<dbReference type="GeneID" id="49787469"/>
<dbReference type="KEGG" id="ypo:BZ17_2033"/>
<dbReference type="KEGG" id="yps:YPTB0529"/>
<dbReference type="PATRIC" id="fig|273123.14.peg.2159"/>
<dbReference type="Proteomes" id="UP000001011">
    <property type="component" value="Chromosome"/>
</dbReference>
<dbReference type="GO" id="GO:0005829">
    <property type="term" value="C:cytosol"/>
    <property type="evidence" value="ECO:0007669"/>
    <property type="project" value="TreeGrafter"/>
</dbReference>
<dbReference type="GO" id="GO:0002161">
    <property type="term" value="F:aminoacyl-tRNA deacylase activity"/>
    <property type="evidence" value="ECO:0007669"/>
    <property type="project" value="InterPro"/>
</dbReference>
<dbReference type="GO" id="GO:0005524">
    <property type="term" value="F:ATP binding"/>
    <property type="evidence" value="ECO:0007669"/>
    <property type="project" value="UniProtKB-UniRule"/>
</dbReference>
<dbReference type="GO" id="GO:0004832">
    <property type="term" value="F:valine-tRNA ligase activity"/>
    <property type="evidence" value="ECO:0007669"/>
    <property type="project" value="UniProtKB-UniRule"/>
</dbReference>
<dbReference type="GO" id="GO:0006438">
    <property type="term" value="P:valyl-tRNA aminoacylation"/>
    <property type="evidence" value="ECO:0007669"/>
    <property type="project" value="UniProtKB-UniRule"/>
</dbReference>
<dbReference type="CDD" id="cd07962">
    <property type="entry name" value="Anticodon_Ia_Val"/>
    <property type="match status" value="1"/>
</dbReference>
<dbReference type="CDD" id="cd00817">
    <property type="entry name" value="ValRS_core"/>
    <property type="match status" value="1"/>
</dbReference>
<dbReference type="FunFam" id="1.10.287.380:FF:000001">
    <property type="entry name" value="Valine--tRNA ligase"/>
    <property type="match status" value="1"/>
</dbReference>
<dbReference type="FunFam" id="1.10.730.10:FF:000007">
    <property type="entry name" value="Valine--tRNA ligase"/>
    <property type="match status" value="1"/>
</dbReference>
<dbReference type="FunFam" id="3.40.50.620:FF:000032">
    <property type="entry name" value="Valine--tRNA ligase"/>
    <property type="match status" value="1"/>
</dbReference>
<dbReference type="FunFam" id="3.40.50.620:FF:000146">
    <property type="entry name" value="Valine--tRNA ligase"/>
    <property type="match status" value="1"/>
</dbReference>
<dbReference type="FunFam" id="3.90.740.10:FF:000003">
    <property type="entry name" value="Valine--tRNA ligase"/>
    <property type="match status" value="1"/>
</dbReference>
<dbReference type="FunFam" id="3.90.740.10:FF:000004">
    <property type="entry name" value="Valine--tRNA ligase"/>
    <property type="match status" value="1"/>
</dbReference>
<dbReference type="Gene3D" id="3.40.50.620">
    <property type="entry name" value="HUPs"/>
    <property type="match status" value="2"/>
</dbReference>
<dbReference type="Gene3D" id="1.10.730.10">
    <property type="entry name" value="Isoleucyl-tRNA Synthetase, Domain 1"/>
    <property type="match status" value="1"/>
</dbReference>
<dbReference type="Gene3D" id="1.10.287.380">
    <property type="entry name" value="Valyl-tRNA synthetase, C-terminal domain"/>
    <property type="match status" value="1"/>
</dbReference>
<dbReference type="Gene3D" id="3.90.740.10">
    <property type="entry name" value="Valyl/Leucyl/Isoleucyl-tRNA synthetase, editing domain"/>
    <property type="match status" value="2"/>
</dbReference>
<dbReference type="HAMAP" id="MF_02004">
    <property type="entry name" value="Val_tRNA_synth_type1"/>
    <property type="match status" value="1"/>
</dbReference>
<dbReference type="InterPro" id="IPR001412">
    <property type="entry name" value="aa-tRNA-synth_I_CS"/>
</dbReference>
<dbReference type="InterPro" id="IPR002300">
    <property type="entry name" value="aa-tRNA-synth_Ia"/>
</dbReference>
<dbReference type="InterPro" id="IPR033705">
    <property type="entry name" value="Anticodon_Ia_Val"/>
</dbReference>
<dbReference type="InterPro" id="IPR013155">
    <property type="entry name" value="M/V/L/I-tRNA-synth_anticd-bd"/>
</dbReference>
<dbReference type="InterPro" id="IPR014729">
    <property type="entry name" value="Rossmann-like_a/b/a_fold"/>
</dbReference>
<dbReference type="InterPro" id="IPR010978">
    <property type="entry name" value="tRNA-bd_arm"/>
</dbReference>
<dbReference type="InterPro" id="IPR009080">
    <property type="entry name" value="tRNAsynth_Ia_anticodon-bd"/>
</dbReference>
<dbReference type="InterPro" id="IPR037118">
    <property type="entry name" value="Val-tRNA_synth_C_sf"/>
</dbReference>
<dbReference type="InterPro" id="IPR019499">
    <property type="entry name" value="Val-tRNA_synth_tRNA-bd"/>
</dbReference>
<dbReference type="InterPro" id="IPR009008">
    <property type="entry name" value="Val/Leu/Ile-tRNA-synth_edit"/>
</dbReference>
<dbReference type="InterPro" id="IPR002303">
    <property type="entry name" value="Valyl-tRNA_ligase"/>
</dbReference>
<dbReference type="NCBIfam" id="NF004349">
    <property type="entry name" value="PRK05729.1"/>
    <property type="match status" value="1"/>
</dbReference>
<dbReference type="NCBIfam" id="TIGR00422">
    <property type="entry name" value="valS"/>
    <property type="match status" value="1"/>
</dbReference>
<dbReference type="PANTHER" id="PTHR11946:SF93">
    <property type="entry name" value="VALINE--TRNA LIGASE, CHLOROPLASTIC_MITOCHONDRIAL 2"/>
    <property type="match status" value="1"/>
</dbReference>
<dbReference type="PANTHER" id="PTHR11946">
    <property type="entry name" value="VALYL-TRNA SYNTHETASES"/>
    <property type="match status" value="1"/>
</dbReference>
<dbReference type="Pfam" id="PF08264">
    <property type="entry name" value="Anticodon_1"/>
    <property type="match status" value="1"/>
</dbReference>
<dbReference type="Pfam" id="PF00133">
    <property type="entry name" value="tRNA-synt_1"/>
    <property type="match status" value="1"/>
</dbReference>
<dbReference type="Pfam" id="PF10458">
    <property type="entry name" value="Val_tRNA-synt_C"/>
    <property type="match status" value="1"/>
</dbReference>
<dbReference type="PRINTS" id="PR00986">
    <property type="entry name" value="TRNASYNTHVAL"/>
</dbReference>
<dbReference type="SUPFAM" id="SSF47323">
    <property type="entry name" value="Anticodon-binding domain of a subclass of class I aminoacyl-tRNA synthetases"/>
    <property type="match status" value="1"/>
</dbReference>
<dbReference type="SUPFAM" id="SSF52374">
    <property type="entry name" value="Nucleotidylyl transferase"/>
    <property type="match status" value="1"/>
</dbReference>
<dbReference type="SUPFAM" id="SSF46589">
    <property type="entry name" value="tRNA-binding arm"/>
    <property type="match status" value="1"/>
</dbReference>
<dbReference type="SUPFAM" id="SSF50677">
    <property type="entry name" value="ValRS/IleRS/LeuRS editing domain"/>
    <property type="match status" value="1"/>
</dbReference>
<dbReference type="PROSITE" id="PS00178">
    <property type="entry name" value="AA_TRNA_LIGASE_I"/>
    <property type="match status" value="1"/>
</dbReference>
<name>SYV_YERPS</name>
<accession>Q66F11</accession>
<protein>
    <recommendedName>
        <fullName evidence="1">Valine--tRNA ligase</fullName>
        <ecNumber evidence="1">6.1.1.9</ecNumber>
    </recommendedName>
    <alternativeName>
        <fullName evidence="1">Valyl-tRNA synthetase</fullName>
        <shortName evidence="1">ValRS</shortName>
    </alternativeName>
</protein>
<comment type="function">
    <text evidence="1">Catalyzes the attachment of valine to tRNA(Val). As ValRS can inadvertently accommodate and process structurally similar amino acids such as threonine, to avoid such errors, it has a 'posttransfer' editing activity that hydrolyzes mischarged Thr-tRNA(Val) in a tRNA-dependent manner.</text>
</comment>
<comment type="catalytic activity">
    <reaction evidence="1">
        <text>tRNA(Val) + L-valine + ATP = L-valyl-tRNA(Val) + AMP + diphosphate</text>
        <dbReference type="Rhea" id="RHEA:10704"/>
        <dbReference type="Rhea" id="RHEA-COMP:9672"/>
        <dbReference type="Rhea" id="RHEA-COMP:9708"/>
        <dbReference type="ChEBI" id="CHEBI:30616"/>
        <dbReference type="ChEBI" id="CHEBI:33019"/>
        <dbReference type="ChEBI" id="CHEBI:57762"/>
        <dbReference type="ChEBI" id="CHEBI:78442"/>
        <dbReference type="ChEBI" id="CHEBI:78537"/>
        <dbReference type="ChEBI" id="CHEBI:456215"/>
        <dbReference type="EC" id="6.1.1.9"/>
    </reaction>
</comment>
<comment type="subunit">
    <text evidence="1">Monomer.</text>
</comment>
<comment type="subcellular location">
    <subcellularLocation>
        <location evidence="1">Cytoplasm</location>
    </subcellularLocation>
</comment>
<comment type="domain">
    <text evidence="1">ValRS has two distinct active sites: one for aminoacylation and one for editing. The misactivated threonine is translocated from the active site to the editing site.</text>
</comment>
<comment type="domain">
    <text evidence="1">The C-terminal coiled-coil domain is crucial for aminoacylation activity.</text>
</comment>
<comment type="similarity">
    <text evidence="1">Belongs to the class-I aminoacyl-tRNA synthetase family. ValS type 1 subfamily.</text>
</comment>
<sequence>MENTPSHINKTEPSLDKTYSPQEIEQPLYEHWEKQGYFKPNGDTSKESYCIMIPPPNVTGSLHMGHAFQQTIMDTLIRYQRMQGKNTLWQAGTDHAGIATQMVVERKIAAEEGKTRHDYGRDAFIDKIWEWKGESGGTITRQMRRLGNSVDWERERFTMDEGLSNAVKEVFVRLHKEDLIYRGKRLVNWDPKLRTAISDLEVENRESKGSMWHLRYPLADGAKTAEGKDYLVVATTRPETVLGDTGVAVNPEDPRYKDLIGKEVILPLVGRRIPILGDEHADMEKGTGCVKITPAHDFNDYEVGKRHALPMINILTFDGDIRSEAEVFDTHGEATDAFSNAIPAQFQGLERFAARKAVVAEFEKLGLLEEVKPHDLTVPYGDRGGVVIEPMLTDQWYVRTAPLAKVAIEAVENGEIQFVPKQYENMYYSWMRDIQDWCISRQLWWGHRIPAWYDEQGNVYVGRDEAEVRRDNNLGAEVALRQDEDVLDTWFSSGLWTFSTLGWPEQTDALKTFHPTSVVVSGFDIIFFWIARMIMLTMHFMKDENGKPQVPFKTVYMTGLIRDDEGQKMSKSKGNVIDPLDMVDGISLEALLEKRTGNMMQPQLAEKIRKRTEKQFPNGIEPHGTDALRFTLAALASTGRDINWDMKRLEGYRNFCNKLWNASRFVLMNTEGQDCGQNGGEMVLSLADRWILAEFNQTIKAYREAMDTYRFDLAAGILYEFTWNQFCDWYLELTKPVMNSGSEAELRGTRHTLIQVLEALLRLAHPIIPYITETIWQRVKNLKGITADTIMLQPFPEYDASQVDEQALSDLEWIKQTIIAVRNIRAEMNIAPGKPLEVMLRGANAQAQRRVLENQSFIQSLARLSSLTLLAEGDKGPVSVTKLVEGAEVLIPMAGLIDKATELDRLAKEVAKLDAEIERIEGKLGNEGFVARAPEAVVAKERERLAACAEAKQKLIEQQATIAAL</sequence>